<keyword id="KW-0045">Antibiotic biosynthesis</keyword>
<keyword id="KW-0808">Transferase</keyword>
<sequence length="520" mass="57143">MLIVAFKPGHDGAVAAIGDRRLLYSLESEKDSRPRYSPILATTVLDLAERLGEVPDVVALGGWSDLRPNRISYTGAGYSGIEEPTVTTSRFFGKEVKFFSSTHERSHIYMALGMAPRDDSPVQTVLVWEGDVGAFYVIDGHQRITRKVQVMSGPGARYSFLFGLADPTFPTTGGKPRLNDAGKLMALAAFGDSADADADITHVVERILKQDSMYPAPKGEYRDSVLYNAGVESPECKIAAALLTERLFETFAEVARQEMPEGSPLYISGGCGLNCDWNSLWAQLGHFSSVFVAPCTNDSGSALGTAIDALTTFTGDPHVDWSVYSGLEFVTDTQPDPARWTSRPLEHDELSGALAGGRVVAWVQGRWEIGPRALCNRSLLAEPFGAVTRDRLNEIKQREDYRPIAPVCRVEDLGKVFHEDFEDPYMLYFRRVRESSGLRAVTHVDGSARVQTVRDSGNPQMHRLLSAFAAQRGVGVLCNTSLNFNGEGFINRMSDLVLYCESRGISDMVVGDTWYQRAEG</sequence>
<protein>
    <recommendedName>
        <fullName>3'-hydroxymethylcephem-O-carbamoyltransferase</fullName>
        <shortName>3'-hydroxymethylcephem-O-CASE</shortName>
        <shortName>CCT</shortName>
        <ecNumber>2.1.3.-</ecNumber>
    </recommendedName>
</protein>
<reference key="1">
    <citation type="journal article" date="1995" name="Gene">
        <title>Characterization of the cmcH genes of Nocardia lactamdurans and Streptomyces clavuligerus encoding a functional 3'-hydroxymethylcephem O-carbamoyltransferase for cephamycin biosynthesis.</title>
        <authorList>
            <person name="Coque J.J.R."/>
            <person name="Perez-Llarena F.J."/>
            <person name="Enguita F.J."/>
            <person name="Fuente J.L."/>
            <person name="Martin J.F."/>
            <person name="Liras P."/>
        </authorList>
    </citation>
    <scope>NUCLEOTIDE SEQUENCE [GENOMIC DNA]</scope>
</reference>
<name>CMCH_AMYLA</name>
<dbReference type="EC" id="2.1.3.-"/>
<dbReference type="EMBL" id="Z21682">
    <property type="protein sequence ID" value="CAA79798.1"/>
    <property type="molecule type" value="Genomic_DNA"/>
</dbReference>
<dbReference type="PIR" id="S40256">
    <property type="entry name" value="S40256"/>
</dbReference>
<dbReference type="SMR" id="Q51080"/>
<dbReference type="UniPathway" id="UPA00183"/>
<dbReference type="GO" id="GO:0016740">
    <property type="term" value="F:transferase activity"/>
    <property type="evidence" value="ECO:0007669"/>
    <property type="project" value="UniProtKB-KW"/>
</dbReference>
<dbReference type="GO" id="GO:0017000">
    <property type="term" value="P:antibiotic biosynthetic process"/>
    <property type="evidence" value="ECO:0007669"/>
    <property type="project" value="UniProtKB-KW"/>
</dbReference>
<dbReference type="CDD" id="cd24102">
    <property type="entry name" value="ASKHA_NBD_CmcH_N"/>
    <property type="match status" value="1"/>
</dbReference>
<dbReference type="Gene3D" id="3.30.420.40">
    <property type="match status" value="1"/>
</dbReference>
<dbReference type="Gene3D" id="3.90.870.20">
    <property type="entry name" value="Carbamoyltransferase, C-terminal domain"/>
    <property type="match status" value="1"/>
</dbReference>
<dbReference type="InterPro" id="IPR031730">
    <property type="entry name" value="Carbam_trans_C"/>
</dbReference>
<dbReference type="InterPro" id="IPR038152">
    <property type="entry name" value="Carbam_trans_C_sf"/>
</dbReference>
<dbReference type="InterPro" id="IPR003696">
    <property type="entry name" value="Carbtransf_dom"/>
</dbReference>
<dbReference type="InterPro" id="IPR051338">
    <property type="entry name" value="NodU/CmcH_Carbamoyltrnsfr"/>
</dbReference>
<dbReference type="PANTHER" id="PTHR34847">
    <property type="entry name" value="NODULATION PROTEIN U"/>
    <property type="match status" value="1"/>
</dbReference>
<dbReference type="PANTHER" id="PTHR34847:SF1">
    <property type="entry name" value="NODULATION PROTEIN U"/>
    <property type="match status" value="1"/>
</dbReference>
<dbReference type="Pfam" id="PF16861">
    <property type="entry name" value="Carbam_trans_C"/>
    <property type="match status" value="1"/>
</dbReference>
<dbReference type="Pfam" id="PF02543">
    <property type="entry name" value="Carbam_trans_N"/>
    <property type="match status" value="1"/>
</dbReference>
<proteinExistence type="inferred from homology"/>
<gene>
    <name type="primary">cmcH</name>
</gene>
<organism>
    <name type="scientific">Amycolatopsis lactamdurans</name>
    <name type="common">Nocardia lactamdurans</name>
    <dbReference type="NCBI Taxonomy" id="1913"/>
    <lineage>
        <taxon>Bacteria</taxon>
        <taxon>Bacillati</taxon>
        <taxon>Actinomycetota</taxon>
        <taxon>Actinomycetes</taxon>
        <taxon>Pseudonocardiales</taxon>
        <taxon>Pseudonocardiaceae</taxon>
        <taxon>Amycolatopsis</taxon>
    </lineage>
</organism>
<accession>Q51080</accession>
<evidence type="ECO:0000305" key="1"/>
<feature type="chain" id="PRO_0000207854" description="3'-hydroxymethylcephem-O-carbamoyltransferase">
    <location>
        <begin position="1"/>
        <end position="520"/>
    </location>
</feature>
<comment type="function">
    <text>Catalyzes the carbamoylation reaction in the cephamycin biosynthesis.</text>
</comment>
<comment type="pathway">
    <text>Antibiotic biosynthesis; cephamycin C biosynthesis.</text>
</comment>
<comment type="similarity">
    <text evidence="1">Belongs to the NodU/CmcH family.</text>
</comment>